<dbReference type="EMBL" id="AE000666">
    <property type="protein sequence ID" value="AAB84671.1"/>
    <property type="molecule type" value="Genomic_DNA"/>
</dbReference>
<dbReference type="PIR" id="E69087">
    <property type="entry name" value="E69087"/>
</dbReference>
<dbReference type="RefSeq" id="WP_010875804.1">
    <property type="nucleotide sequence ID" value="NC_000916.1"/>
</dbReference>
<dbReference type="SMR" id="O26267"/>
<dbReference type="FunCoup" id="O26267">
    <property type="interactions" value="54"/>
</dbReference>
<dbReference type="STRING" id="187420.MTH_165"/>
<dbReference type="PaxDb" id="187420-MTH_165"/>
<dbReference type="EnsemblBacteria" id="AAB84671">
    <property type="protein sequence ID" value="AAB84671"/>
    <property type="gene ID" value="MTH_165"/>
</dbReference>
<dbReference type="GeneID" id="1470126"/>
<dbReference type="KEGG" id="mth:MTH_165"/>
<dbReference type="HOGENOM" id="CLU_169299_1_0_2"/>
<dbReference type="InParanoid" id="O26267"/>
<dbReference type="Proteomes" id="UP000005223">
    <property type="component" value="Chromosome"/>
</dbReference>
<dbReference type="GO" id="GO:0048500">
    <property type="term" value="C:signal recognition particle"/>
    <property type="evidence" value="ECO:0007669"/>
    <property type="project" value="UniProtKB-UniRule"/>
</dbReference>
<dbReference type="GO" id="GO:0008312">
    <property type="term" value="F:7S RNA binding"/>
    <property type="evidence" value="ECO:0007669"/>
    <property type="project" value="UniProtKB-UniRule"/>
</dbReference>
<dbReference type="GO" id="GO:0006617">
    <property type="term" value="P:SRP-dependent cotranslational protein targeting to membrane, signal sequence recognition"/>
    <property type="evidence" value="ECO:0007669"/>
    <property type="project" value="TreeGrafter"/>
</dbReference>
<dbReference type="Gene3D" id="3.30.56.30">
    <property type="entry name" value="Signal recognition particle, SRP19-like subunit"/>
    <property type="match status" value="1"/>
</dbReference>
<dbReference type="HAMAP" id="MF_00305">
    <property type="entry name" value="SRP19"/>
    <property type="match status" value="1"/>
</dbReference>
<dbReference type="InterPro" id="IPR002778">
    <property type="entry name" value="Signal_recog_particle_SRP19"/>
</dbReference>
<dbReference type="InterPro" id="IPR036521">
    <property type="entry name" value="SRP19-like_sf"/>
</dbReference>
<dbReference type="InterPro" id="IPR022938">
    <property type="entry name" value="SRP19_arc-type"/>
</dbReference>
<dbReference type="PANTHER" id="PTHR17453">
    <property type="entry name" value="SIGNAL RECOGNITION PARTICLE 19 KD PROTEIN"/>
    <property type="match status" value="1"/>
</dbReference>
<dbReference type="PANTHER" id="PTHR17453:SF0">
    <property type="entry name" value="SIGNAL RECOGNITION PARTICLE 19 KDA PROTEIN"/>
    <property type="match status" value="1"/>
</dbReference>
<dbReference type="Pfam" id="PF01922">
    <property type="entry name" value="SRP19"/>
    <property type="match status" value="1"/>
</dbReference>
<dbReference type="SUPFAM" id="SSF69695">
    <property type="entry name" value="SRP19"/>
    <property type="match status" value="1"/>
</dbReference>
<sequence>MNLIIWPTYLDSRKSRSEGRRVPLEYAVESPTASEILRAARKLQLEASMESDRAYPPSWWESSGRVVVEYNGKKSELLPKIARLVRSSRKR</sequence>
<name>SRP19_METTH</name>
<reference key="1">
    <citation type="journal article" date="1997" name="J. Bacteriol.">
        <title>Complete genome sequence of Methanobacterium thermoautotrophicum deltaH: functional analysis and comparative genomics.</title>
        <authorList>
            <person name="Smith D.R."/>
            <person name="Doucette-Stamm L.A."/>
            <person name="Deloughery C."/>
            <person name="Lee H.-M."/>
            <person name="Dubois J."/>
            <person name="Aldredge T."/>
            <person name="Bashirzadeh R."/>
            <person name="Blakely D."/>
            <person name="Cook R."/>
            <person name="Gilbert K."/>
            <person name="Harrison D."/>
            <person name="Hoang L."/>
            <person name="Keagle P."/>
            <person name="Lumm W."/>
            <person name="Pothier B."/>
            <person name="Qiu D."/>
            <person name="Spadafora R."/>
            <person name="Vicare R."/>
            <person name="Wang Y."/>
            <person name="Wierzbowski J."/>
            <person name="Gibson R."/>
            <person name="Jiwani N."/>
            <person name="Caruso A."/>
            <person name="Bush D."/>
            <person name="Safer H."/>
            <person name="Patwell D."/>
            <person name="Prabhakar S."/>
            <person name="McDougall S."/>
            <person name="Shimer G."/>
            <person name="Goyal A."/>
            <person name="Pietrovski S."/>
            <person name="Church G.M."/>
            <person name="Daniels C.J."/>
            <person name="Mao J.-I."/>
            <person name="Rice P."/>
            <person name="Noelling J."/>
            <person name="Reeve J.N."/>
        </authorList>
    </citation>
    <scope>NUCLEOTIDE SEQUENCE [LARGE SCALE GENOMIC DNA]</scope>
    <source>
        <strain>ATCC 29096 / DSM 1053 / JCM 10044 / NBRC 100330 / Delta H</strain>
    </source>
</reference>
<gene>
    <name evidence="1" type="primary">srp19</name>
    <name type="ordered locus">MTH_165</name>
</gene>
<protein>
    <recommendedName>
        <fullName evidence="1">Signal recognition particle 19 kDa protein</fullName>
        <shortName evidence="1">SRP19</shortName>
    </recommendedName>
</protein>
<keyword id="KW-0963">Cytoplasm</keyword>
<keyword id="KW-1185">Reference proteome</keyword>
<keyword id="KW-0687">Ribonucleoprotein</keyword>
<keyword id="KW-0694">RNA-binding</keyword>
<keyword id="KW-0733">Signal recognition particle</keyword>
<proteinExistence type="inferred from homology"/>
<feature type="chain" id="PRO_0000135220" description="Signal recognition particle 19 kDa protein">
    <location>
        <begin position="1"/>
        <end position="91"/>
    </location>
</feature>
<organism>
    <name type="scientific">Methanothermobacter thermautotrophicus (strain ATCC 29096 / DSM 1053 / JCM 10044 / NBRC 100330 / Delta H)</name>
    <name type="common">Methanobacterium thermoautotrophicum</name>
    <dbReference type="NCBI Taxonomy" id="187420"/>
    <lineage>
        <taxon>Archaea</taxon>
        <taxon>Methanobacteriati</taxon>
        <taxon>Methanobacteriota</taxon>
        <taxon>Methanomada group</taxon>
        <taxon>Methanobacteria</taxon>
        <taxon>Methanobacteriales</taxon>
        <taxon>Methanobacteriaceae</taxon>
        <taxon>Methanothermobacter</taxon>
    </lineage>
</organism>
<evidence type="ECO:0000255" key="1">
    <source>
        <dbReference type="HAMAP-Rule" id="MF_00305"/>
    </source>
</evidence>
<comment type="function">
    <text evidence="1">Involved in targeting and insertion of nascent membrane proteins into the cytoplasmic membrane. Binds directly to 7S RNA and mediates binding of the 54 kDa subunit of the SRP.</text>
</comment>
<comment type="subunit">
    <text evidence="1">Part of the signal recognition particle protein translocation system, which is composed of SRP and FtsY. Archaeal SRP consists of a 7S RNA molecule of 300 nucleotides and two protein subunits: SRP54 and SRP19.</text>
</comment>
<comment type="subcellular location">
    <subcellularLocation>
        <location evidence="1">Cytoplasm</location>
    </subcellularLocation>
</comment>
<comment type="similarity">
    <text evidence="1">Belongs to the SRP19 family.</text>
</comment>
<accession>O26267</accession>